<name>RBL_VICCZ</name>
<evidence type="ECO:0000250" key="1"/>
<evidence type="ECO:0000255" key="2">
    <source>
        <dbReference type="PROSITE-ProRule" id="PRU10114"/>
    </source>
</evidence>
<evidence type="ECO:0000305" key="3"/>
<geneLocation type="chloroplast"/>
<organism>
    <name type="scientific">Victoria cruziana</name>
    <name type="common">Santa Cruz water lily</name>
    <dbReference type="NCBI Taxonomy" id="4421"/>
    <lineage>
        <taxon>Eukaryota</taxon>
        <taxon>Viridiplantae</taxon>
        <taxon>Streptophyta</taxon>
        <taxon>Embryophyta</taxon>
        <taxon>Tracheophyta</taxon>
        <taxon>Spermatophyta</taxon>
        <taxon>Magnoliopsida</taxon>
        <taxon>Nymphaeales</taxon>
        <taxon>Nymphaeaceae</taxon>
        <taxon>Victoria</taxon>
    </lineage>
</organism>
<reference key="1">
    <citation type="journal article" date="1991" name="Proc. Natl. Acad. Sci. U.S.A.">
        <title>Molecular evolutionary history of ancient aquatic angiosperms.</title>
        <authorList>
            <person name="Les D.H."/>
            <person name="Garvin D.K."/>
            <person name="Wimpee C.F."/>
        </authorList>
    </citation>
    <scope>NUCLEOTIDE SEQUENCE [GENOMIC DNA]</scope>
</reference>
<gene>
    <name type="primary">rbcL</name>
</gene>
<comment type="function">
    <text evidence="1">RuBisCO catalyzes two reactions: the carboxylation of D-ribulose 1,5-bisphosphate, the primary event in carbon dioxide fixation, as well as the oxidative fragmentation of the pentose substrate in the photorespiration process. Both reactions occur simultaneously and in competition at the same active site (By similarity).</text>
</comment>
<comment type="catalytic activity">
    <reaction>
        <text>2 (2R)-3-phosphoglycerate + 2 H(+) = D-ribulose 1,5-bisphosphate + CO2 + H2O</text>
        <dbReference type="Rhea" id="RHEA:23124"/>
        <dbReference type="ChEBI" id="CHEBI:15377"/>
        <dbReference type="ChEBI" id="CHEBI:15378"/>
        <dbReference type="ChEBI" id="CHEBI:16526"/>
        <dbReference type="ChEBI" id="CHEBI:57870"/>
        <dbReference type="ChEBI" id="CHEBI:58272"/>
        <dbReference type="EC" id="4.1.1.39"/>
    </reaction>
</comment>
<comment type="catalytic activity">
    <reaction>
        <text>D-ribulose 1,5-bisphosphate + O2 = 2-phosphoglycolate + (2R)-3-phosphoglycerate + 2 H(+)</text>
        <dbReference type="Rhea" id="RHEA:36631"/>
        <dbReference type="ChEBI" id="CHEBI:15378"/>
        <dbReference type="ChEBI" id="CHEBI:15379"/>
        <dbReference type="ChEBI" id="CHEBI:57870"/>
        <dbReference type="ChEBI" id="CHEBI:58033"/>
        <dbReference type="ChEBI" id="CHEBI:58272"/>
    </reaction>
</comment>
<comment type="cofactor">
    <cofactor evidence="1">
        <name>Mg(2+)</name>
        <dbReference type="ChEBI" id="CHEBI:18420"/>
    </cofactor>
    <text evidence="1">Binds 1 Mg(2+) ion per subunit.</text>
</comment>
<comment type="subunit">
    <text evidence="1">Heterohexadecamer of 8 large chains and 8 small chains.</text>
</comment>
<comment type="subcellular location">
    <subcellularLocation>
        <location>Plastid</location>
        <location>Chloroplast</location>
    </subcellularLocation>
</comment>
<comment type="miscellaneous">
    <text evidence="1">The basic functional RuBisCO is composed of a large chain homodimer in a 'head-to-tail' conformation. In form I RuBisCO this homodimer is arranged in a barrel-like tetramer with the small subunits forming a tetrameric 'cap' on each end of the 'barrel' (By similarity).</text>
</comment>
<comment type="similarity">
    <text evidence="3">Belongs to the RuBisCO large chain family. Type I subfamily.</text>
</comment>
<keyword id="KW-0113">Calvin cycle</keyword>
<keyword id="KW-0120">Carbon dioxide fixation</keyword>
<keyword id="KW-0150">Chloroplast</keyword>
<keyword id="KW-0456">Lyase</keyword>
<keyword id="KW-0460">Magnesium</keyword>
<keyword id="KW-0479">Metal-binding</keyword>
<keyword id="KW-0488">Methylation</keyword>
<keyword id="KW-0503">Monooxygenase</keyword>
<keyword id="KW-0560">Oxidoreductase</keyword>
<keyword id="KW-0601">Photorespiration</keyword>
<keyword id="KW-0602">Photosynthesis</keyword>
<keyword id="KW-0934">Plastid</keyword>
<accession>Q05803</accession>
<feature type="chain" id="PRO_0000062610" description="Ribulose bisphosphate carboxylase large chain">
    <location>
        <begin position="1" status="less than"/>
        <end position="394" status="greater than"/>
    </location>
</feature>
<feature type="active site" description="Proton acceptor" evidence="1">
    <location>
        <position position="166"/>
    </location>
</feature>
<feature type="active site" description="Proton acceptor" evidence="1">
    <location>
        <position position="285"/>
    </location>
</feature>
<feature type="binding site" description="in homodimeric partner" evidence="1">
    <location>
        <position position="114"/>
    </location>
    <ligand>
        <name>substrate</name>
    </ligand>
</feature>
<feature type="binding site" evidence="1">
    <location>
        <position position="164"/>
    </location>
    <ligand>
        <name>substrate</name>
    </ligand>
</feature>
<feature type="binding site" evidence="1">
    <location>
        <position position="168"/>
    </location>
    <ligand>
        <name>substrate</name>
    </ligand>
</feature>
<feature type="binding site" description="via carbamate group" evidence="2">
    <location>
        <position position="192"/>
    </location>
    <ligand>
        <name>Mg(2+)</name>
        <dbReference type="ChEBI" id="CHEBI:18420"/>
    </ligand>
</feature>
<feature type="binding site" evidence="2">
    <location>
        <position position="194"/>
    </location>
    <ligand>
        <name>Mg(2+)</name>
        <dbReference type="ChEBI" id="CHEBI:18420"/>
    </ligand>
</feature>
<feature type="binding site" evidence="2">
    <location>
        <position position="195"/>
    </location>
    <ligand>
        <name>Mg(2+)</name>
        <dbReference type="ChEBI" id="CHEBI:18420"/>
    </ligand>
</feature>
<feature type="binding site" evidence="1">
    <location>
        <position position="286"/>
    </location>
    <ligand>
        <name>substrate</name>
    </ligand>
</feature>
<feature type="binding site" evidence="1">
    <location>
        <position position="318"/>
    </location>
    <ligand>
        <name>substrate</name>
    </ligand>
</feature>
<feature type="binding site" evidence="1">
    <location>
        <position position="370"/>
    </location>
    <ligand>
        <name>substrate</name>
    </ligand>
</feature>
<feature type="site" description="Transition state stabilizer" evidence="1">
    <location>
        <position position="325"/>
    </location>
</feature>
<feature type="modified residue" description="N6,N6,N6-trimethyllysine" evidence="1">
    <location>
        <position position="5"/>
    </location>
</feature>
<feature type="modified residue" description="N6-carboxylysine" evidence="2">
    <location>
        <position position="192"/>
    </location>
</feature>
<feature type="non-terminal residue">
    <location>
        <position position="1"/>
    </location>
</feature>
<feature type="non-terminal residue">
    <location>
        <position position="394"/>
    </location>
</feature>
<dbReference type="EC" id="4.1.1.39"/>
<dbReference type="EMBL" id="M77036">
    <property type="protein sequence ID" value="AAA84716.1"/>
    <property type="molecule type" value="Genomic_DNA"/>
</dbReference>
<dbReference type="SMR" id="Q05803"/>
<dbReference type="GO" id="GO:0009507">
    <property type="term" value="C:chloroplast"/>
    <property type="evidence" value="ECO:0007669"/>
    <property type="project" value="UniProtKB-SubCell"/>
</dbReference>
<dbReference type="GO" id="GO:0000287">
    <property type="term" value="F:magnesium ion binding"/>
    <property type="evidence" value="ECO:0007669"/>
    <property type="project" value="InterPro"/>
</dbReference>
<dbReference type="GO" id="GO:0004497">
    <property type="term" value="F:monooxygenase activity"/>
    <property type="evidence" value="ECO:0007669"/>
    <property type="project" value="UniProtKB-KW"/>
</dbReference>
<dbReference type="GO" id="GO:0016984">
    <property type="term" value="F:ribulose-bisphosphate carboxylase activity"/>
    <property type="evidence" value="ECO:0007669"/>
    <property type="project" value="UniProtKB-EC"/>
</dbReference>
<dbReference type="GO" id="GO:0009853">
    <property type="term" value="P:photorespiration"/>
    <property type="evidence" value="ECO:0007669"/>
    <property type="project" value="UniProtKB-KW"/>
</dbReference>
<dbReference type="GO" id="GO:0019253">
    <property type="term" value="P:reductive pentose-phosphate cycle"/>
    <property type="evidence" value="ECO:0007669"/>
    <property type="project" value="UniProtKB-KW"/>
</dbReference>
<dbReference type="FunFam" id="3.20.20.110:FF:000003">
    <property type="entry name" value="Ribulose bisphosphate carboxylase large chain"/>
    <property type="match status" value="1"/>
</dbReference>
<dbReference type="FunFam" id="3.30.70.150:FF:000001">
    <property type="entry name" value="Ribulose bisphosphate carboxylase large chain"/>
    <property type="match status" value="1"/>
</dbReference>
<dbReference type="Gene3D" id="3.20.20.110">
    <property type="entry name" value="Ribulose bisphosphate carboxylase, large subunit, C-terminal domain"/>
    <property type="match status" value="1"/>
</dbReference>
<dbReference type="Gene3D" id="3.30.70.150">
    <property type="entry name" value="RuBisCO large subunit, N-terminal domain"/>
    <property type="match status" value="1"/>
</dbReference>
<dbReference type="InterPro" id="IPR033966">
    <property type="entry name" value="RuBisCO"/>
</dbReference>
<dbReference type="InterPro" id="IPR020878">
    <property type="entry name" value="RuBisCo_large_chain_AS"/>
</dbReference>
<dbReference type="InterPro" id="IPR000685">
    <property type="entry name" value="RuBisCO_lsu_C"/>
</dbReference>
<dbReference type="InterPro" id="IPR036376">
    <property type="entry name" value="RuBisCO_lsu_C_sf"/>
</dbReference>
<dbReference type="InterPro" id="IPR017443">
    <property type="entry name" value="RuBisCO_lsu_fd_N"/>
</dbReference>
<dbReference type="InterPro" id="IPR036422">
    <property type="entry name" value="RuBisCO_lsu_N_sf"/>
</dbReference>
<dbReference type="NCBIfam" id="NF003252">
    <property type="entry name" value="PRK04208.1"/>
    <property type="match status" value="1"/>
</dbReference>
<dbReference type="PANTHER" id="PTHR42704">
    <property type="entry name" value="RIBULOSE BISPHOSPHATE CARBOXYLASE"/>
    <property type="match status" value="1"/>
</dbReference>
<dbReference type="PANTHER" id="PTHR42704:SF19">
    <property type="entry name" value="RIBULOSE BISPHOSPHATE CARBOXYLASE LARGE CHAIN"/>
    <property type="match status" value="1"/>
</dbReference>
<dbReference type="Pfam" id="PF00016">
    <property type="entry name" value="RuBisCO_large"/>
    <property type="match status" value="1"/>
</dbReference>
<dbReference type="Pfam" id="PF02788">
    <property type="entry name" value="RuBisCO_large_N"/>
    <property type="match status" value="1"/>
</dbReference>
<dbReference type="SFLD" id="SFLDS00014">
    <property type="entry name" value="RuBisCO"/>
    <property type="match status" value="1"/>
</dbReference>
<dbReference type="SFLD" id="SFLDG00301">
    <property type="entry name" value="RuBisCO-like_proteins"/>
    <property type="match status" value="1"/>
</dbReference>
<dbReference type="SUPFAM" id="SSF51649">
    <property type="entry name" value="RuBisCo, C-terminal domain"/>
    <property type="match status" value="1"/>
</dbReference>
<dbReference type="SUPFAM" id="SSF54966">
    <property type="entry name" value="RuBisCO, large subunit, small (N-terminal) domain"/>
    <property type="match status" value="1"/>
</dbReference>
<dbReference type="PROSITE" id="PS00157">
    <property type="entry name" value="RUBISCO_LARGE"/>
    <property type="match status" value="1"/>
</dbReference>
<proteinExistence type="inferred from homology"/>
<sequence>SVGFKAGVKDYRLTYYTPDYETLATDILAAFRVTPQPGVPPEEAGAAVAAESSTGTWTTVWTDGLTSLDRYKGRCYHIEPVAGEENQYIAYVAYPLDLFEEGSVTNMFTSIVGNVFGFKALRALRLEDLRIPPAYSKTFQGPPHGIQVERDKLNKYGRPLLGCTIKPKLGLSAKNYGRAVYECLRGGLDFTKDDENVNSQPFMRWRDRFLFCTEAIYKAQAETGEIKGHYLNATAGTSEEMIKRAVCARELGVPIVMHDYLTGGFTANTSLAHYCRDNGLLLHIHRAMHAVIDRQRNHGIHFRVLAKALRMSGGDHIHSGTVVGKLEGERDVTLGFVDLLRDDFIEKDRSRGIYFTQDWVSMPGVLPVASGGIHVWHMPALTEIFGDDSVLQFG</sequence>
<protein>
    <recommendedName>
        <fullName>Ribulose bisphosphate carboxylase large chain</fullName>
        <shortName>RuBisCO large subunit</shortName>
        <ecNumber>4.1.1.39</ecNumber>
    </recommendedName>
</protein>